<keyword id="KW-0687">Ribonucleoprotein</keyword>
<keyword id="KW-0689">Ribosomal protein</keyword>
<organism>
    <name type="scientific">Histophilus somni (strain 129Pt)</name>
    <name type="common">Haemophilus somnus</name>
    <dbReference type="NCBI Taxonomy" id="205914"/>
    <lineage>
        <taxon>Bacteria</taxon>
        <taxon>Pseudomonadati</taxon>
        <taxon>Pseudomonadota</taxon>
        <taxon>Gammaproteobacteria</taxon>
        <taxon>Pasteurellales</taxon>
        <taxon>Pasteurellaceae</taxon>
        <taxon>Histophilus</taxon>
    </lineage>
</organism>
<sequence>MKRTFQPSVLKRNRTHGFRARMATKNGRQVLARRRAKGRKSLSA</sequence>
<evidence type="ECO:0000255" key="1">
    <source>
        <dbReference type="HAMAP-Rule" id="MF_00391"/>
    </source>
</evidence>
<evidence type="ECO:0000305" key="2"/>
<gene>
    <name evidence="1" type="primary">rpmH</name>
    <name type="ordered locus">HS_0135.1</name>
    <name type="ORF">HS_0135a</name>
</gene>
<dbReference type="EMBL" id="CP000436">
    <property type="protein sequence ID" value="ABI26063.1"/>
    <property type="molecule type" value="Genomic_DNA"/>
</dbReference>
<dbReference type="SMR" id="Q0I0Y8"/>
<dbReference type="KEGG" id="hso:HS_0135a"/>
<dbReference type="eggNOG" id="COG0230">
    <property type="taxonomic scope" value="Bacteria"/>
</dbReference>
<dbReference type="HOGENOM" id="CLU_129938_2_0_6"/>
<dbReference type="GO" id="GO:1990904">
    <property type="term" value="C:ribonucleoprotein complex"/>
    <property type="evidence" value="ECO:0007669"/>
    <property type="project" value="UniProtKB-KW"/>
</dbReference>
<dbReference type="GO" id="GO:0005840">
    <property type="term" value="C:ribosome"/>
    <property type="evidence" value="ECO:0007669"/>
    <property type="project" value="UniProtKB-KW"/>
</dbReference>
<dbReference type="GO" id="GO:0003735">
    <property type="term" value="F:structural constituent of ribosome"/>
    <property type="evidence" value="ECO:0007669"/>
    <property type="project" value="InterPro"/>
</dbReference>
<dbReference type="GO" id="GO:0006412">
    <property type="term" value="P:translation"/>
    <property type="evidence" value="ECO:0007669"/>
    <property type="project" value="UniProtKB-UniRule"/>
</dbReference>
<dbReference type="FunFam" id="1.10.287.3980:FF:000001">
    <property type="entry name" value="Mitochondrial ribosomal protein L34"/>
    <property type="match status" value="1"/>
</dbReference>
<dbReference type="Gene3D" id="1.10.287.3980">
    <property type="match status" value="1"/>
</dbReference>
<dbReference type="HAMAP" id="MF_00391">
    <property type="entry name" value="Ribosomal_bL34"/>
    <property type="match status" value="1"/>
</dbReference>
<dbReference type="InterPro" id="IPR000271">
    <property type="entry name" value="Ribosomal_bL34"/>
</dbReference>
<dbReference type="InterPro" id="IPR020939">
    <property type="entry name" value="Ribosomal_bL34_CS"/>
</dbReference>
<dbReference type="NCBIfam" id="TIGR01030">
    <property type="entry name" value="rpmH_bact"/>
    <property type="match status" value="1"/>
</dbReference>
<dbReference type="PANTHER" id="PTHR14503:SF4">
    <property type="entry name" value="LARGE RIBOSOMAL SUBUNIT PROTEIN BL34M"/>
    <property type="match status" value="1"/>
</dbReference>
<dbReference type="PANTHER" id="PTHR14503">
    <property type="entry name" value="MITOCHONDRIAL RIBOSOMAL PROTEIN 34 FAMILY MEMBER"/>
    <property type="match status" value="1"/>
</dbReference>
<dbReference type="Pfam" id="PF00468">
    <property type="entry name" value="Ribosomal_L34"/>
    <property type="match status" value="1"/>
</dbReference>
<dbReference type="PROSITE" id="PS00784">
    <property type="entry name" value="RIBOSOMAL_L34"/>
    <property type="match status" value="1"/>
</dbReference>
<name>RL34_HISS1</name>
<comment type="similarity">
    <text evidence="1">Belongs to the bacterial ribosomal protein bL34 family.</text>
</comment>
<protein>
    <recommendedName>
        <fullName evidence="1">Large ribosomal subunit protein bL34</fullName>
    </recommendedName>
    <alternativeName>
        <fullName evidence="2">50S ribosomal protein L34</fullName>
    </alternativeName>
</protein>
<accession>Q0I0Y8</accession>
<proteinExistence type="inferred from homology"/>
<reference key="1">
    <citation type="journal article" date="2007" name="J. Bacteriol.">
        <title>Complete genome sequence of Haemophilus somnus (Histophilus somni) strain 129Pt and comparison to Haemophilus ducreyi 35000HP and Haemophilus influenzae Rd.</title>
        <authorList>
            <person name="Challacombe J.F."/>
            <person name="Duncan A.J."/>
            <person name="Brettin T.S."/>
            <person name="Bruce D."/>
            <person name="Chertkov O."/>
            <person name="Detter J.C."/>
            <person name="Han C.S."/>
            <person name="Misra M."/>
            <person name="Richardson P."/>
            <person name="Tapia R."/>
            <person name="Thayer N."/>
            <person name="Xie G."/>
            <person name="Inzana T.J."/>
        </authorList>
    </citation>
    <scope>NUCLEOTIDE SEQUENCE [LARGE SCALE GENOMIC DNA]</scope>
    <source>
        <strain>129Pt</strain>
    </source>
</reference>
<feature type="chain" id="PRO_1000013351" description="Large ribosomal subunit protein bL34">
    <location>
        <begin position="1"/>
        <end position="44"/>
    </location>
</feature>